<proteinExistence type="inferred from homology"/>
<protein>
    <recommendedName>
        <fullName evidence="1">Phosphoribosylformylglycinamidine synthase subunit PurQ</fullName>
        <shortName evidence="1">FGAM synthase</shortName>
        <ecNumber evidence="1">6.3.5.3</ecNumber>
    </recommendedName>
    <alternativeName>
        <fullName evidence="1">Formylglycinamide ribonucleotide amidotransferase subunit I</fullName>
        <shortName evidence="1">FGAR amidotransferase I</shortName>
        <shortName evidence="1">FGAR-AT I</shortName>
    </alternativeName>
    <alternativeName>
        <fullName evidence="1">Glutaminase PurQ</fullName>
        <ecNumber evidence="1">3.5.1.2</ecNumber>
    </alternativeName>
    <alternativeName>
        <fullName evidence="1">Phosphoribosylformylglycinamidine synthase subunit I</fullName>
    </alternativeName>
</protein>
<evidence type="ECO:0000255" key="1">
    <source>
        <dbReference type="HAMAP-Rule" id="MF_00421"/>
    </source>
</evidence>
<gene>
    <name evidence="1" type="primary">purQ</name>
    <name type="ordered locus">SSO0628</name>
    <name type="ORF">C08_022</name>
</gene>
<feature type="chain" id="PRO_0000100619" description="Phosphoribosylformylglycinamidine synthase subunit PurQ">
    <location>
        <begin position="1"/>
        <end position="224"/>
    </location>
</feature>
<feature type="domain" description="Glutamine amidotransferase type-1" evidence="1">
    <location>
        <begin position="1"/>
        <end position="224"/>
    </location>
</feature>
<feature type="active site" description="Nucleophile" evidence="1">
    <location>
        <position position="84"/>
    </location>
</feature>
<feature type="active site" evidence="1">
    <location>
        <position position="196"/>
    </location>
</feature>
<feature type="active site" evidence="1">
    <location>
        <position position="198"/>
    </location>
</feature>
<organism>
    <name type="scientific">Saccharolobus solfataricus (strain ATCC 35092 / DSM 1617 / JCM 11322 / P2)</name>
    <name type="common">Sulfolobus solfataricus</name>
    <dbReference type="NCBI Taxonomy" id="273057"/>
    <lineage>
        <taxon>Archaea</taxon>
        <taxon>Thermoproteota</taxon>
        <taxon>Thermoprotei</taxon>
        <taxon>Sulfolobales</taxon>
        <taxon>Sulfolobaceae</taxon>
        <taxon>Saccharolobus</taxon>
    </lineage>
</organism>
<comment type="function">
    <text evidence="1">Part of the phosphoribosylformylglycinamidine synthase complex involved in the purines biosynthetic pathway. Catalyzes the ATP-dependent conversion of formylglycinamide ribonucleotide (FGAR) and glutamine to yield formylglycinamidine ribonucleotide (FGAM) and glutamate. The FGAM synthase complex is composed of three subunits. PurQ produces an ammonia molecule by converting glutamine to glutamate. PurL transfers the ammonia molecule to FGAR to form FGAM in an ATP-dependent manner. PurS interacts with PurQ and PurL and is thought to assist in the transfer of the ammonia molecule from PurQ to PurL.</text>
</comment>
<comment type="catalytic activity">
    <reaction evidence="1">
        <text>N(2)-formyl-N(1)-(5-phospho-beta-D-ribosyl)glycinamide + L-glutamine + ATP + H2O = 2-formamido-N(1)-(5-O-phospho-beta-D-ribosyl)acetamidine + L-glutamate + ADP + phosphate + H(+)</text>
        <dbReference type="Rhea" id="RHEA:17129"/>
        <dbReference type="ChEBI" id="CHEBI:15377"/>
        <dbReference type="ChEBI" id="CHEBI:15378"/>
        <dbReference type="ChEBI" id="CHEBI:29985"/>
        <dbReference type="ChEBI" id="CHEBI:30616"/>
        <dbReference type="ChEBI" id="CHEBI:43474"/>
        <dbReference type="ChEBI" id="CHEBI:58359"/>
        <dbReference type="ChEBI" id="CHEBI:147286"/>
        <dbReference type="ChEBI" id="CHEBI:147287"/>
        <dbReference type="ChEBI" id="CHEBI:456216"/>
        <dbReference type="EC" id="6.3.5.3"/>
    </reaction>
</comment>
<comment type="catalytic activity">
    <reaction evidence="1">
        <text>L-glutamine + H2O = L-glutamate + NH4(+)</text>
        <dbReference type="Rhea" id="RHEA:15889"/>
        <dbReference type="ChEBI" id="CHEBI:15377"/>
        <dbReference type="ChEBI" id="CHEBI:28938"/>
        <dbReference type="ChEBI" id="CHEBI:29985"/>
        <dbReference type="ChEBI" id="CHEBI:58359"/>
        <dbReference type="EC" id="3.5.1.2"/>
    </reaction>
</comment>
<comment type="pathway">
    <text evidence="1">Purine metabolism; IMP biosynthesis via de novo pathway; 5-amino-1-(5-phospho-D-ribosyl)imidazole from N(2)-formyl-N(1)-(5-phospho-D-ribosyl)glycinamide: step 1/2.</text>
</comment>
<comment type="subunit">
    <text evidence="1">Part of the FGAM synthase complex composed of 1 PurL, 1 PurQ and 2 PurS subunits.</text>
</comment>
<comment type="subcellular location">
    <subcellularLocation>
        <location evidence="1">Cytoplasm</location>
    </subcellularLocation>
</comment>
<dbReference type="EC" id="6.3.5.3" evidence="1"/>
<dbReference type="EC" id="3.5.1.2" evidence="1"/>
<dbReference type="EMBL" id="Y18930">
    <property type="protein sequence ID" value="CAB57673.1"/>
    <property type="molecule type" value="Genomic_DNA"/>
</dbReference>
<dbReference type="EMBL" id="AE006641">
    <property type="protein sequence ID" value="AAK40939.1"/>
    <property type="molecule type" value="Genomic_DNA"/>
</dbReference>
<dbReference type="PIR" id="D90210">
    <property type="entry name" value="D90210"/>
</dbReference>
<dbReference type="RefSeq" id="WP_009991164.1">
    <property type="nucleotide sequence ID" value="NC_002754.1"/>
</dbReference>
<dbReference type="SMR" id="Q9UX21"/>
<dbReference type="FunCoup" id="Q9UX21">
    <property type="interactions" value="30"/>
</dbReference>
<dbReference type="STRING" id="273057.SSO0628"/>
<dbReference type="PaxDb" id="273057-SSO0628"/>
<dbReference type="EnsemblBacteria" id="AAK40939">
    <property type="protein sequence ID" value="AAK40939"/>
    <property type="gene ID" value="SSO0628"/>
</dbReference>
<dbReference type="GeneID" id="44129630"/>
<dbReference type="KEGG" id="sso:SSO0628"/>
<dbReference type="PATRIC" id="fig|273057.12.peg.635"/>
<dbReference type="eggNOG" id="arCOG00102">
    <property type="taxonomic scope" value="Archaea"/>
</dbReference>
<dbReference type="HOGENOM" id="CLU_001031_3_1_2"/>
<dbReference type="InParanoid" id="Q9UX21"/>
<dbReference type="PhylomeDB" id="Q9UX21"/>
<dbReference type="UniPathway" id="UPA00074">
    <property type="reaction ID" value="UER00128"/>
</dbReference>
<dbReference type="Proteomes" id="UP000001974">
    <property type="component" value="Chromosome"/>
</dbReference>
<dbReference type="GO" id="GO:0005737">
    <property type="term" value="C:cytoplasm"/>
    <property type="evidence" value="ECO:0007669"/>
    <property type="project" value="UniProtKB-SubCell"/>
</dbReference>
<dbReference type="GO" id="GO:0005524">
    <property type="term" value="F:ATP binding"/>
    <property type="evidence" value="ECO:0007669"/>
    <property type="project" value="UniProtKB-KW"/>
</dbReference>
<dbReference type="GO" id="GO:0004359">
    <property type="term" value="F:glutaminase activity"/>
    <property type="evidence" value="ECO:0007669"/>
    <property type="project" value="UniProtKB-EC"/>
</dbReference>
<dbReference type="GO" id="GO:0004642">
    <property type="term" value="F:phosphoribosylformylglycinamidine synthase activity"/>
    <property type="evidence" value="ECO:0007669"/>
    <property type="project" value="UniProtKB-UniRule"/>
</dbReference>
<dbReference type="GO" id="GO:0006189">
    <property type="term" value="P:'de novo' IMP biosynthetic process"/>
    <property type="evidence" value="ECO:0007669"/>
    <property type="project" value="UniProtKB-UniRule"/>
</dbReference>
<dbReference type="CDD" id="cd01740">
    <property type="entry name" value="GATase1_FGAR_AT"/>
    <property type="match status" value="1"/>
</dbReference>
<dbReference type="Gene3D" id="3.40.50.880">
    <property type="match status" value="1"/>
</dbReference>
<dbReference type="HAMAP" id="MF_00421">
    <property type="entry name" value="PurQ"/>
    <property type="match status" value="1"/>
</dbReference>
<dbReference type="InterPro" id="IPR029062">
    <property type="entry name" value="Class_I_gatase-like"/>
</dbReference>
<dbReference type="InterPro" id="IPR010075">
    <property type="entry name" value="PRibForGlyAmidine_synth_PurQ"/>
</dbReference>
<dbReference type="NCBIfam" id="TIGR01737">
    <property type="entry name" value="FGAM_synth_I"/>
    <property type="match status" value="1"/>
</dbReference>
<dbReference type="NCBIfam" id="NF002957">
    <property type="entry name" value="PRK03619.1"/>
    <property type="match status" value="1"/>
</dbReference>
<dbReference type="PANTHER" id="PTHR47552">
    <property type="entry name" value="PHOSPHORIBOSYLFORMYLGLYCINAMIDINE SYNTHASE SUBUNIT PURQ"/>
    <property type="match status" value="1"/>
</dbReference>
<dbReference type="PANTHER" id="PTHR47552:SF1">
    <property type="entry name" value="PHOSPHORIBOSYLFORMYLGLYCINAMIDINE SYNTHASE SUBUNIT PURQ"/>
    <property type="match status" value="1"/>
</dbReference>
<dbReference type="Pfam" id="PF13507">
    <property type="entry name" value="GATase_5"/>
    <property type="match status" value="1"/>
</dbReference>
<dbReference type="PIRSF" id="PIRSF001586">
    <property type="entry name" value="FGAM_synth_I"/>
    <property type="match status" value="1"/>
</dbReference>
<dbReference type="SMART" id="SM01211">
    <property type="entry name" value="GATase_5"/>
    <property type="match status" value="1"/>
</dbReference>
<dbReference type="SUPFAM" id="SSF52317">
    <property type="entry name" value="Class I glutamine amidotransferase-like"/>
    <property type="match status" value="1"/>
</dbReference>
<dbReference type="PROSITE" id="PS51273">
    <property type="entry name" value="GATASE_TYPE_1"/>
    <property type="match status" value="1"/>
</dbReference>
<keyword id="KW-0067">ATP-binding</keyword>
<keyword id="KW-0963">Cytoplasm</keyword>
<keyword id="KW-0315">Glutamine amidotransferase</keyword>
<keyword id="KW-0378">Hydrolase</keyword>
<keyword id="KW-0436">Ligase</keyword>
<keyword id="KW-0547">Nucleotide-binding</keyword>
<keyword id="KW-0658">Purine biosynthesis</keyword>
<keyword id="KW-1185">Reference proteome</keyword>
<reference key="1">
    <citation type="journal article" date="2000" name="Genome">
        <title>Gene content and organization of a 281-kbp contig from the genome of the extremely thermophilic archaeon, Sulfolobus solfataricus P2.</title>
        <authorList>
            <person name="Charlebois R.L."/>
            <person name="Singh R.K."/>
            <person name="Chan-Weiher C.C.-Y."/>
            <person name="Allard G."/>
            <person name="Chow C."/>
            <person name="Confalonieri F."/>
            <person name="Curtis B."/>
            <person name="Duguet M."/>
            <person name="Erauso G."/>
            <person name="Faguy D."/>
            <person name="Gaasterland T."/>
            <person name="Garrett R.A."/>
            <person name="Gordon P."/>
            <person name="Jeffries A.C."/>
            <person name="Kozera C."/>
            <person name="Kushwaha N."/>
            <person name="Lafleur E."/>
            <person name="Medina N."/>
            <person name="Peng X."/>
            <person name="Penny S.L."/>
            <person name="She Q."/>
            <person name="St Jean A."/>
            <person name="van der Oost J."/>
            <person name="Young F."/>
            <person name="Zivanovic Y."/>
            <person name="Doolittle W.F."/>
            <person name="Ragan M.A."/>
            <person name="Sensen C.W."/>
        </authorList>
    </citation>
    <scope>NUCLEOTIDE SEQUENCE [LARGE SCALE GENOMIC DNA]</scope>
    <source>
        <strain>ATCC 35092 / DSM 1617 / JCM 11322 / P2</strain>
    </source>
</reference>
<reference key="2">
    <citation type="journal article" date="2001" name="Proc. Natl. Acad. Sci. U.S.A.">
        <title>The complete genome of the crenarchaeon Sulfolobus solfataricus P2.</title>
        <authorList>
            <person name="She Q."/>
            <person name="Singh R.K."/>
            <person name="Confalonieri F."/>
            <person name="Zivanovic Y."/>
            <person name="Allard G."/>
            <person name="Awayez M.J."/>
            <person name="Chan-Weiher C.C.-Y."/>
            <person name="Clausen I.G."/>
            <person name="Curtis B.A."/>
            <person name="De Moors A."/>
            <person name="Erauso G."/>
            <person name="Fletcher C."/>
            <person name="Gordon P.M.K."/>
            <person name="Heikamp-de Jong I."/>
            <person name="Jeffries A.C."/>
            <person name="Kozera C.J."/>
            <person name="Medina N."/>
            <person name="Peng X."/>
            <person name="Thi-Ngoc H.P."/>
            <person name="Redder P."/>
            <person name="Schenk M.E."/>
            <person name="Theriault C."/>
            <person name="Tolstrup N."/>
            <person name="Charlebois R.L."/>
            <person name="Doolittle W.F."/>
            <person name="Duguet M."/>
            <person name="Gaasterland T."/>
            <person name="Garrett R.A."/>
            <person name="Ragan M.A."/>
            <person name="Sensen C.W."/>
            <person name="Van der Oost J."/>
        </authorList>
    </citation>
    <scope>NUCLEOTIDE SEQUENCE [LARGE SCALE GENOMIC DNA]</scope>
    <source>
        <strain>ATCC 35092 / DSM 1617 / JCM 11322 / P2</strain>
    </source>
</reference>
<name>PURQ_SACS2</name>
<sequence>MIAIIKFPGTTCETDVYKALIEAGVPTVIVKYKDFDPDRYNGVILPGGFSFGDYLRAGSIAASTETMKKVKQMAEDGKIVIGICNGFQILVESGLLKGALLPNLKLRFISKWVYLKVIRADTILTKGLDKKIIRMPIAHAEGRYYVDDIDYAKTHMVLQYCDENGNISEDVNPNGSLLNIASIANEEGNVIGMMPHPERASFKLTSIDGTVDGLILLRRLGEWA</sequence>
<accession>Q9UX21</accession>